<dbReference type="EMBL" id="CP001186">
    <property type="protein sequence ID" value="ACK94632.1"/>
    <property type="molecule type" value="Genomic_DNA"/>
</dbReference>
<dbReference type="RefSeq" id="WP_000831901.1">
    <property type="nucleotide sequence ID" value="NC_011772.1"/>
</dbReference>
<dbReference type="SMR" id="B7IST8"/>
<dbReference type="GeneID" id="93005634"/>
<dbReference type="KEGG" id="bcg:BCG9842_B5320"/>
<dbReference type="HOGENOM" id="CLU_129938_2_0_9"/>
<dbReference type="Proteomes" id="UP000006744">
    <property type="component" value="Chromosome"/>
</dbReference>
<dbReference type="GO" id="GO:1990904">
    <property type="term" value="C:ribonucleoprotein complex"/>
    <property type="evidence" value="ECO:0007669"/>
    <property type="project" value="UniProtKB-KW"/>
</dbReference>
<dbReference type="GO" id="GO:0005840">
    <property type="term" value="C:ribosome"/>
    <property type="evidence" value="ECO:0007669"/>
    <property type="project" value="UniProtKB-KW"/>
</dbReference>
<dbReference type="GO" id="GO:0003735">
    <property type="term" value="F:structural constituent of ribosome"/>
    <property type="evidence" value="ECO:0007669"/>
    <property type="project" value="InterPro"/>
</dbReference>
<dbReference type="GO" id="GO:0006412">
    <property type="term" value="P:translation"/>
    <property type="evidence" value="ECO:0007669"/>
    <property type="project" value="UniProtKB-UniRule"/>
</dbReference>
<dbReference type="FunFam" id="1.10.287.3980:FF:000001">
    <property type="entry name" value="Mitochondrial ribosomal protein L34"/>
    <property type="match status" value="1"/>
</dbReference>
<dbReference type="Gene3D" id="1.10.287.3980">
    <property type="match status" value="1"/>
</dbReference>
<dbReference type="HAMAP" id="MF_00391">
    <property type="entry name" value="Ribosomal_bL34"/>
    <property type="match status" value="1"/>
</dbReference>
<dbReference type="InterPro" id="IPR000271">
    <property type="entry name" value="Ribosomal_bL34"/>
</dbReference>
<dbReference type="InterPro" id="IPR020939">
    <property type="entry name" value="Ribosomal_bL34_CS"/>
</dbReference>
<dbReference type="NCBIfam" id="TIGR01030">
    <property type="entry name" value="rpmH_bact"/>
    <property type="match status" value="1"/>
</dbReference>
<dbReference type="PANTHER" id="PTHR14503:SF4">
    <property type="entry name" value="LARGE RIBOSOMAL SUBUNIT PROTEIN BL34M"/>
    <property type="match status" value="1"/>
</dbReference>
<dbReference type="PANTHER" id="PTHR14503">
    <property type="entry name" value="MITOCHONDRIAL RIBOSOMAL PROTEIN 34 FAMILY MEMBER"/>
    <property type="match status" value="1"/>
</dbReference>
<dbReference type="Pfam" id="PF00468">
    <property type="entry name" value="Ribosomal_L34"/>
    <property type="match status" value="1"/>
</dbReference>
<dbReference type="PROSITE" id="PS00784">
    <property type="entry name" value="RIBOSOMAL_L34"/>
    <property type="match status" value="1"/>
</dbReference>
<organism>
    <name type="scientific">Bacillus cereus (strain G9842)</name>
    <dbReference type="NCBI Taxonomy" id="405531"/>
    <lineage>
        <taxon>Bacteria</taxon>
        <taxon>Bacillati</taxon>
        <taxon>Bacillota</taxon>
        <taxon>Bacilli</taxon>
        <taxon>Bacillales</taxon>
        <taxon>Bacillaceae</taxon>
        <taxon>Bacillus</taxon>
        <taxon>Bacillus cereus group</taxon>
    </lineage>
</organism>
<accession>B7IST8</accession>
<keyword id="KW-0687">Ribonucleoprotein</keyword>
<keyword id="KW-0689">Ribosomal protein</keyword>
<comment type="similarity">
    <text evidence="1">Belongs to the bacterial ribosomal protein bL34 family.</text>
</comment>
<reference key="1">
    <citation type="submission" date="2008-10" db="EMBL/GenBank/DDBJ databases">
        <title>Genome sequence of Bacillus cereus G9842.</title>
        <authorList>
            <person name="Dodson R.J."/>
            <person name="Durkin A.S."/>
            <person name="Rosovitz M.J."/>
            <person name="Rasko D.A."/>
            <person name="Hoffmaster A."/>
            <person name="Ravel J."/>
            <person name="Sutton G."/>
        </authorList>
    </citation>
    <scope>NUCLEOTIDE SEQUENCE [LARGE SCALE GENOMIC DNA]</scope>
    <source>
        <strain>G9842</strain>
    </source>
</reference>
<evidence type="ECO:0000255" key="1">
    <source>
        <dbReference type="HAMAP-Rule" id="MF_00391"/>
    </source>
</evidence>
<evidence type="ECO:0000256" key="2">
    <source>
        <dbReference type="SAM" id="MobiDB-lite"/>
    </source>
</evidence>
<evidence type="ECO:0000305" key="3"/>
<feature type="chain" id="PRO_1000122893" description="Large ribosomal subunit protein bL34">
    <location>
        <begin position="1"/>
        <end position="44"/>
    </location>
</feature>
<feature type="region of interest" description="Disordered" evidence="2">
    <location>
        <begin position="1"/>
        <end position="44"/>
    </location>
</feature>
<feature type="compositionally biased region" description="Basic residues" evidence="2">
    <location>
        <begin position="1"/>
        <end position="19"/>
    </location>
</feature>
<feature type="compositionally biased region" description="Basic residues" evidence="2">
    <location>
        <begin position="31"/>
        <end position="44"/>
    </location>
</feature>
<gene>
    <name evidence="1" type="primary">rpmH</name>
    <name type="ordered locus">BCG9842_B5320</name>
</gene>
<sequence>MKRTYQPNKRKRSKVHGFRSRMSTANGRKVLAARRRKGRKVLSA</sequence>
<proteinExistence type="inferred from homology"/>
<name>RL34_BACC2</name>
<protein>
    <recommendedName>
        <fullName evidence="1">Large ribosomal subunit protein bL34</fullName>
    </recommendedName>
    <alternativeName>
        <fullName evidence="3">50S ribosomal protein L34</fullName>
    </alternativeName>
</protein>